<keyword id="KW-0067">ATP-binding</keyword>
<keyword id="KW-0319">Glycerol metabolism</keyword>
<keyword id="KW-0418">Kinase</keyword>
<keyword id="KW-0547">Nucleotide-binding</keyword>
<keyword id="KW-1185">Reference proteome</keyword>
<keyword id="KW-0808">Transferase</keyword>
<feature type="chain" id="PRO_0000059468" description="Glycerol kinase">
    <location>
        <begin position="1"/>
        <end position="508"/>
    </location>
</feature>
<feature type="binding site" evidence="1">
    <location>
        <position position="15"/>
    </location>
    <ligand>
        <name>ADP</name>
        <dbReference type="ChEBI" id="CHEBI:456216"/>
    </ligand>
</feature>
<feature type="binding site" evidence="1">
    <location>
        <position position="15"/>
    </location>
    <ligand>
        <name>ATP</name>
        <dbReference type="ChEBI" id="CHEBI:30616"/>
    </ligand>
</feature>
<feature type="binding site" evidence="1">
    <location>
        <position position="15"/>
    </location>
    <ligand>
        <name>sn-glycerol 3-phosphate</name>
        <dbReference type="ChEBI" id="CHEBI:57597"/>
    </ligand>
</feature>
<feature type="binding site" evidence="1">
    <location>
        <position position="16"/>
    </location>
    <ligand>
        <name>ATP</name>
        <dbReference type="ChEBI" id="CHEBI:30616"/>
    </ligand>
</feature>
<feature type="binding site" evidence="1">
    <location>
        <position position="17"/>
    </location>
    <ligand>
        <name>ATP</name>
        <dbReference type="ChEBI" id="CHEBI:30616"/>
    </ligand>
</feature>
<feature type="binding site" evidence="1">
    <location>
        <position position="19"/>
    </location>
    <ligand>
        <name>ADP</name>
        <dbReference type="ChEBI" id="CHEBI:456216"/>
    </ligand>
</feature>
<feature type="binding site" evidence="1">
    <location>
        <position position="85"/>
    </location>
    <ligand>
        <name>glycerol</name>
        <dbReference type="ChEBI" id="CHEBI:17754"/>
    </ligand>
</feature>
<feature type="binding site" evidence="1">
    <location>
        <position position="85"/>
    </location>
    <ligand>
        <name>sn-glycerol 3-phosphate</name>
        <dbReference type="ChEBI" id="CHEBI:57597"/>
    </ligand>
</feature>
<feature type="binding site" evidence="1">
    <location>
        <position position="86"/>
    </location>
    <ligand>
        <name>glycerol</name>
        <dbReference type="ChEBI" id="CHEBI:17754"/>
    </ligand>
</feature>
<feature type="binding site" evidence="1">
    <location>
        <position position="86"/>
    </location>
    <ligand>
        <name>sn-glycerol 3-phosphate</name>
        <dbReference type="ChEBI" id="CHEBI:57597"/>
    </ligand>
</feature>
<feature type="binding site" evidence="1">
    <location>
        <position position="138"/>
    </location>
    <ligand>
        <name>glycerol</name>
        <dbReference type="ChEBI" id="CHEBI:17754"/>
    </ligand>
</feature>
<feature type="binding site" evidence="1">
    <location>
        <position position="138"/>
    </location>
    <ligand>
        <name>sn-glycerol 3-phosphate</name>
        <dbReference type="ChEBI" id="CHEBI:57597"/>
    </ligand>
</feature>
<feature type="binding site" evidence="1">
    <location>
        <position position="251"/>
    </location>
    <ligand>
        <name>glycerol</name>
        <dbReference type="ChEBI" id="CHEBI:17754"/>
    </ligand>
</feature>
<feature type="binding site" evidence="1">
    <location>
        <position position="251"/>
    </location>
    <ligand>
        <name>sn-glycerol 3-phosphate</name>
        <dbReference type="ChEBI" id="CHEBI:57597"/>
    </ligand>
</feature>
<feature type="binding site" evidence="1">
    <location>
        <position position="252"/>
    </location>
    <ligand>
        <name>glycerol</name>
        <dbReference type="ChEBI" id="CHEBI:17754"/>
    </ligand>
</feature>
<feature type="binding site" evidence="1">
    <location>
        <position position="273"/>
    </location>
    <ligand>
        <name>ADP</name>
        <dbReference type="ChEBI" id="CHEBI:456216"/>
    </ligand>
</feature>
<feature type="binding site" evidence="1">
    <location>
        <position position="273"/>
    </location>
    <ligand>
        <name>ATP</name>
        <dbReference type="ChEBI" id="CHEBI:30616"/>
    </ligand>
</feature>
<feature type="binding site" evidence="1">
    <location>
        <position position="317"/>
    </location>
    <ligand>
        <name>ADP</name>
        <dbReference type="ChEBI" id="CHEBI:456216"/>
    </ligand>
</feature>
<feature type="binding site" evidence="1">
    <location>
        <position position="317"/>
    </location>
    <ligand>
        <name>ATP</name>
        <dbReference type="ChEBI" id="CHEBI:30616"/>
    </ligand>
</feature>
<feature type="binding site" evidence="1">
    <location>
        <position position="419"/>
    </location>
    <ligand>
        <name>ADP</name>
        <dbReference type="ChEBI" id="CHEBI:456216"/>
    </ligand>
</feature>
<feature type="binding site" evidence="1">
    <location>
        <position position="419"/>
    </location>
    <ligand>
        <name>ATP</name>
        <dbReference type="ChEBI" id="CHEBI:30616"/>
    </ligand>
</feature>
<accession>P75064</accession>
<comment type="function">
    <text evidence="1">Key enzyme in the regulation of glycerol uptake and metabolism. Catalyzes the phosphorylation of glycerol to yield sn-glycerol 3-phosphate.</text>
</comment>
<comment type="catalytic activity">
    <reaction evidence="1">
        <text>glycerol + ATP = sn-glycerol 3-phosphate + ADP + H(+)</text>
        <dbReference type="Rhea" id="RHEA:21644"/>
        <dbReference type="ChEBI" id="CHEBI:15378"/>
        <dbReference type="ChEBI" id="CHEBI:17754"/>
        <dbReference type="ChEBI" id="CHEBI:30616"/>
        <dbReference type="ChEBI" id="CHEBI:57597"/>
        <dbReference type="ChEBI" id="CHEBI:456216"/>
        <dbReference type="EC" id="2.7.1.30"/>
    </reaction>
</comment>
<comment type="activity regulation">
    <text evidence="1">Inhibited by fructose 1,6-bisphosphate (FBP).</text>
</comment>
<comment type="pathway">
    <text evidence="1">Polyol metabolism; glycerol degradation via glycerol kinase pathway; sn-glycerol 3-phosphate from glycerol: step 1/1.</text>
</comment>
<comment type="similarity">
    <text evidence="1">Belongs to the FGGY kinase family.</text>
</comment>
<protein>
    <recommendedName>
        <fullName evidence="1">Glycerol kinase</fullName>
        <ecNumber evidence="1">2.7.1.30</ecNumber>
    </recommendedName>
    <alternativeName>
        <fullName evidence="1">ATP:glycerol 3-phosphotransferase</fullName>
    </alternativeName>
    <alternativeName>
        <fullName evidence="1">Glycerokinase</fullName>
        <shortName evidence="1">GK</shortName>
    </alternativeName>
</protein>
<name>GLPK_MYCPN</name>
<proteinExistence type="inferred from homology"/>
<gene>
    <name evidence="1" type="primary">glpK</name>
    <name type="ordered locus">MPN_050</name>
    <name type="ORF">MP104</name>
</gene>
<organism>
    <name type="scientific">Mycoplasma pneumoniae (strain ATCC 29342 / M129 / Subtype 1)</name>
    <name type="common">Mycoplasmoides pneumoniae</name>
    <dbReference type="NCBI Taxonomy" id="272634"/>
    <lineage>
        <taxon>Bacteria</taxon>
        <taxon>Bacillati</taxon>
        <taxon>Mycoplasmatota</taxon>
        <taxon>Mycoplasmoidales</taxon>
        <taxon>Mycoplasmoidaceae</taxon>
        <taxon>Mycoplasmoides</taxon>
    </lineage>
</organism>
<evidence type="ECO:0000255" key="1">
    <source>
        <dbReference type="HAMAP-Rule" id="MF_00186"/>
    </source>
</evidence>
<sequence length="508" mass="56591">MDLKQQYILALDEGTSSCRTIVFDKDLNQVAIAQNEFNQFFPKSGWVEQDPLEIWSVQLATMQSAKNKAQIKSNNIAAVGITNQRETIVLWNKENGLPVYNAIVWQDQRTASLCDKLNQDTKIKEFVKKHTGLPINPYFSATKIAWILENVPLAQKMLKEDKLLAGTIDTWLIWKLTGGKMHVTDVSNASRTLLFDITTMTWSQELGDIFKVPLSILPKVMPSNAHFGDIVPSHWSTSATGMVPIRGVAGDQQAALFGQLCVEPAMVKNTYGTGCFMLMNIGNELKYSQHNLLTTVAWQLENQKPVYALEGSVFVAGAALKWLRDSLKVMYSAAESDFYAKLAQKEEQEVVFVPAFTGLGAPYWDASARGAIFGIEANTKREHLVKATLEAIAFQANDLIKAMASDLNSSIKKIKADGGACNSNYLMQFQADIANLEVIIPKNVETTTMGAAFLAGLAVNYWKDTKQLEKLTGIAKQFKSQMNQTVREKKSKRWNEAVKRTLKWASLD</sequence>
<reference key="1">
    <citation type="journal article" date="1996" name="Nucleic Acids Res.">
        <title>Complete sequence analysis of the genome of the bacterium Mycoplasma pneumoniae.</title>
        <authorList>
            <person name="Himmelreich R."/>
            <person name="Hilbert H."/>
            <person name="Plagens H."/>
            <person name="Pirkl E."/>
            <person name="Li B.-C."/>
            <person name="Herrmann R."/>
        </authorList>
    </citation>
    <scope>NUCLEOTIDE SEQUENCE [LARGE SCALE GENOMIC DNA]</scope>
    <source>
        <strain>ATCC 29342 / M129 / Subtype 1</strain>
    </source>
</reference>
<dbReference type="EC" id="2.7.1.30" evidence="1"/>
<dbReference type="EMBL" id="U00089">
    <property type="protein sequence ID" value="AAB95752.1"/>
    <property type="molecule type" value="Genomic_DNA"/>
</dbReference>
<dbReference type="PIR" id="S73430">
    <property type="entry name" value="S73430"/>
</dbReference>
<dbReference type="RefSeq" id="NP_109738.1">
    <property type="nucleotide sequence ID" value="NC_000912.1"/>
</dbReference>
<dbReference type="RefSeq" id="WP_010874407.1">
    <property type="nucleotide sequence ID" value="NC_000912.1"/>
</dbReference>
<dbReference type="SMR" id="P75064"/>
<dbReference type="IntAct" id="P75064">
    <property type="interactions" value="1"/>
</dbReference>
<dbReference type="STRING" id="272634.MPN_050"/>
<dbReference type="EnsemblBacteria" id="AAB95752">
    <property type="protein sequence ID" value="AAB95752"/>
    <property type="gene ID" value="MPN_050"/>
</dbReference>
<dbReference type="KEGG" id="mpn:MPN_050"/>
<dbReference type="PATRIC" id="fig|272634.6.peg.50"/>
<dbReference type="HOGENOM" id="CLU_009281_2_3_14"/>
<dbReference type="OrthoDB" id="9805576at2"/>
<dbReference type="BioCyc" id="MPNE272634:G1GJ3-73-MONOMER"/>
<dbReference type="UniPathway" id="UPA00618">
    <property type="reaction ID" value="UER00672"/>
</dbReference>
<dbReference type="Proteomes" id="UP000000808">
    <property type="component" value="Chromosome"/>
</dbReference>
<dbReference type="GO" id="GO:0005829">
    <property type="term" value="C:cytosol"/>
    <property type="evidence" value="ECO:0007669"/>
    <property type="project" value="TreeGrafter"/>
</dbReference>
<dbReference type="GO" id="GO:0005524">
    <property type="term" value="F:ATP binding"/>
    <property type="evidence" value="ECO:0007669"/>
    <property type="project" value="UniProtKB-UniRule"/>
</dbReference>
<dbReference type="GO" id="GO:0004370">
    <property type="term" value="F:glycerol kinase activity"/>
    <property type="evidence" value="ECO:0000250"/>
    <property type="project" value="UniProtKB"/>
</dbReference>
<dbReference type="GO" id="GO:0019563">
    <property type="term" value="P:glycerol catabolic process"/>
    <property type="evidence" value="ECO:0007669"/>
    <property type="project" value="UniProtKB-UniRule"/>
</dbReference>
<dbReference type="GO" id="GO:0006071">
    <property type="term" value="P:glycerol metabolic process"/>
    <property type="evidence" value="ECO:0000250"/>
    <property type="project" value="UniProtKB"/>
</dbReference>
<dbReference type="GO" id="GO:0006072">
    <property type="term" value="P:glycerol-3-phosphate metabolic process"/>
    <property type="evidence" value="ECO:0007669"/>
    <property type="project" value="InterPro"/>
</dbReference>
<dbReference type="CDD" id="cd07786">
    <property type="entry name" value="FGGY_EcGK_like"/>
    <property type="match status" value="1"/>
</dbReference>
<dbReference type="FunFam" id="3.30.420.40:FF:000007">
    <property type="entry name" value="Glycerol kinase"/>
    <property type="match status" value="1"/>
</dbReference>
<dbReference type="FunFam" id="3.30.420.40:FF:000008">
    <property type="entry name" value="Glycerol kinase"/>
    <property type="match status" value="1"/>
</dbReference>
<dbReference type="Gene3D" id="3.30.420.40">
    <property type="match status" value="2"/>
</dbReference>
<dbReference type="HAMAP" id="MF_00186">
    <property type="entry name" value="Glycerol_kin"/>
    <property type="match status" value="1"/>
</dbReference>
<dbReference type="InterPro" id="IPR043129">
    <property type="entry name" value="ATPase_NBD"/>
</dbReference>
<dbReference type="InterPro" id="IPR000577">
    <property type="entry name" value="Carb_kinase_FGGY"/>
</dbReference>
<dbReference type="InterPro" id="IPR018483">
    <property type="entry name" value="Carb_kinase_FGGY_CS"/>
</dbReference>
<dbReference type="InterPro" id="IPR018485">
    <property type="entry name" value="FGGY_C"/>
</dbReference>
<dbReference type="InterPro" id="IPR018484">
    <property type="entry name" value="FGGY_N"/>
</dbReference>
<dbReference type="InterPro" id="IPR005999">
    <property type="entry name" value="Glycerol_kin"/>
</dbReference>
<dbReference type="NCBIfam" id="TIGR01311">
    <property type="entry name" value="glycerol_kin"/>
    <property type="match status" value="1"/>
</dbReference>
<dbReference type="NCBIfam" id="NF000756">
    <property type="entry name" value="PRK00047.1"/>
    <property type="match status" value="1"/>
</dbReference>
<dbReference type="PANTHER" id="PTHR10196:SF69">
    <property type="entry name" value="GLYCEROL KINASE"/>
    <property type="match status" value="1"/>
</dbReference>
<dbReference type="PANTHER" id="PTHR10196">
    <property type="entry name" value="SUGAR KINASE"/>
    <property type="match status" value="1"/>
</dbReference>
<dbReference type="Pfam" id="PF02782">
    <property type="entry name" value="FGGY_C"/>
    <property type="match status" value="1"/>
</dbReference>
<dbReference type="Pfam" id="PF00370">
    <property type="entry name" value="FGGY_N"/>
    <property type="match status" value="1"/>
</dbReference>
<dbReference type="PIRSF" id="PIRSF000538">
    <property type="entry name" value="GlpK"/>
    <property type="match status" value="1"/>
</dbReference>
<dbReference type="SUPFAM" id="SSF53067">
    <property type="entry name" value="Actin-like ATPase domain"/>
    <property type="match status" value="2"/>
</dbReference>
<dbReference type="PROSITE" id="PS00933">
    <property type="entry name" value="FGGY_KINASES_1"/>
    <property type="match status" value="1"/>
</dbReference>
<dbReference type="PROSITE" id="PS00445">
    <property type="entry name" value="FGGY_KINASES_2"/>
    <property type="match status" value="1"/>
</dbReference>